<feature type="chain" id="PRO_0000461055" description="Protocetin subunit alpha">
    <location>
        <begin position="1"/>
        <end position="15"/>
    </location>
</feature>
<feature type="non-terminal residue" evidence="3">
    <location>
        <position position="15"/>
    </location>
</feature>
<keyword id="KW-0903">Direct protein sequencing</keyword>
<keyword id="KW-0964">Secreted</keyword>
<evidence type="ECO:0000269" key="1">
    <source ref="1"/>
</evidence>
<evidence type="ECO:0000303" key="2">
    <source ref="1"/>
</evidence>
<evidence type="ECO:0000305" key="3"/>
<evidence type="ECO:0000305" key="4">
    <source ref="1"/>
</evidence>
<sequence length="15" mass="1878">DTPSDWSXFTRYTYK</sequence>
<proteinExistence type="evidence at protein level"/>
<protein>
    <recommendedName>
        <fullName evidence="2">Protocetin subunit alpha</fullName>
    </recommendedName>
</protein>
<accession>C0HMC4</accession>
<reference key="1">
    <citation type="submission" date="2024-06" db="UniProtKB">
        <authorList>
            <person name="Fan-Yu Z."/>
            <person name="Ren-Sheng J."/>
            <person name="Xiao-Qin Y."/>
            <person name="Ya-Nan L."/>
            <person name="Qi-Yun Z."/>
            <person name="Qian-Yun S."/>
        </authorList>
    </citation>
    <scope>PROTEIN SEQUENCE</scope>
    <scope>SUBCELLULAR LOCATION</scope>
    <source>
        <tissue evidence="1">Venom</tissue>
    </source>
</reference>
<name>PRTA_PROMU</name>
<dbReference type="GO" id="GO:0005576">
    <property type="term" value="C:extracellular region"/>
    <property type="evidence" value="ECO:0007669"/>
    <property type="project" value="UniProtKB-SubCell"/>
</dbReference>
<comment type="subcellular location">
    <subcellularLocation>
        <location evidence="1">Secreted</location>
    </subcellularLocation>
</comment>
<comment type="tissue specificity">
    <text evidence="4">Expressed by the venom gland.</text>
</comment>
<comment type="similarity">
    <text evidence="3">Belongs to the snaclec family.</text>
</comment>
<organism>
    <name type="scientific">Protobothrops mucrosquamatus</name>
    <name type="common">Taiwan habu</name>
    <name type="synonym">Trimeresurus mucrosquamatus</name>
    <dbReference type="NCBI Taxonomy" id="103944"/>
    <lineage>
        <taxon>Eukaryota</taxon>
        <taxon>Metazoa</taxon>
        <taxon>Chordata</taxon>
        <taxon>Craniata</taxon>
        <taxon>Vertebrata</taxon>
        <taxon>Euteleostomi</taxon>
        <taxon>Lepidosauria</taxon>
        <taxon>Squamata</taxon>
        <taxon>Bifurcata</taxon>
        <taxon>Unidentata</taxon>
        <taxon>Episquamata</taxon>
        <taxon>Toxicofera</taxon>
        <taxon>Serpentes</taxon>
        <taxon>Colubroidea</taxon>
        <taxon>Viperidae</taxon>
        <taxon>Crotalinae</taxon>
        <taxon>Protobothrops</taxon>
    </lineage>
</organism>